<proteinExistence type="inferred from homology"/>
<protein>
    <recommendedName>
        <fullName evidence="1">Adenylate kinase</fullName>
        <shortName evidence="1">AK</shortName>
        <ecNumber evidence="1">2.7.4.3</ecNumber>
    </recommendedName>
    <alternativeName>
        <fullName evidence="1">ATP-AMP transphosphorylase</fullName>
    </alternativeName>
    <alternativeName>
        <fullName evidence="1">ATP:AMP phosphotransferase</fullName>
    </alternativeName>
    <alternativeName>
        <fullName evidence="1">Adenylate monophosphate kinase</fullName>
    </alternativeName>
</protein>
<evidence type="ECO:0000255" key="1">
    <source>
        <dbReference type="HAMAP-Rule" id="MF_00235"/>
    </source>
</evidence>
<sequence>MRIILLGAPGAGKGTQAKIIEDKYNIAHISTGDMIRETIKSDSEIGKELKKVLDAGQLVSDEFIIKIVKDRISKDDCKNGFLLDGVPRTIIQAEELDKLGVNIDYIVEVDVKDNLLIERITGRRVHPASGRTYHTKFNPPKVEGKDDITGEDLITRTDDNEDTVRERLSVYHAQTSKLIDFYRNFSSTNTKTPKYIKIDGDQAVDKVSQDIFNQLK</sequence>
<dbReference type="EC" id="2.7.4.3" evidence="1"/>
<dbReference type="EMBL" id="CP000937">
    <property type="protein sequence ID" value="ABZ86231.1"/>
    <property type="molecule type" value="Genomic_DNA"/>
</dbReference>
<dbReference type="SMR" id="B0TXR2"/>
<dbReference type="KEGG" id="fph:Fphi_0011"/>
<dbReference type="eggNOG" id="COG0563">
    <property type="taxonomic scope" value="Bacteria"/>
</dbReference>
<dbReference type="HOGENOM" id="CLU_032354_1_2_6"/>
<dbReference type="UniPathway" id="UPA00588">
    <property type="reaction ID" value="UER00649"/>
</dbReference>
<dbReference type="GO" id="GO:0005737">
    <property type="term" value="C:cytoplasm"/>
    <property type="evidence" value="ECO:0007669"/>
    <property type="project" value="UniProtKB-SubCell"/>
</dbReference>
<dbReference type="GO" id="GO:0004017">
    <property type="term" value="F:adenylate kinase activity"/>
    <property type="evidence" value="ECO:0007669"/>
    <property type="project" value="UniProtKB-UniRule"/>
</dbReference>
<dbReference type="GO" id="GO:0005524">
    <property type="term" value="F:ATP binding"/>
    <property type="evidence" value="ECO:0007669"/>
    <property type="project" value="UniProtKB-UniRule"/>
</dbReference>
<dbReference type="GO" id="GO:0044209">
    <property type="term" value="P:AMP salvage"/>
    <property type="evidence" value="ECO:0007669"/>
    <property type="project" value="UniProtKB-UniRule"/>
</dbReference>
<dbReference type="CDD" id="cd01428">
    <property type="entry name" value="ADK"/>
    <property type="match status" value="1"/>
</dbReference>
<dbReference type="FunFam" id="3.40.50.300:FF:000106">
    <property type="entry name" value="Adenylate kinase mitochondrial"/>
    <property type="match status" value="1"/>
</dbReference>
<dbReference type="Gene3D" id="3.40.50.300">
    <property type="entry name" value="P-loop containing nucleotide triphosphate hydrolases"/>
    <property type="match status" value="1"/>
</dbReference>
<dbReference type="HAMAP" id="MF_00235">
    <property type="entry name" value="Adenylate_kinase_Adk"/>
    <property type="match status" value="1"/>
</dbReference>
<dbReference type="InterPro" id="IPR006259">
    <property type="entry name" value="Adenyl_kin_sub"/>
</dbReference>
<dbReference type="InterPro" id="IPR000850">
    <property type="entry name" value="Adenylat/UMP-CMP_kin"/>
</dbReference>
<dbReference type="InterPro" id="IPR007862">
    <property type="entry name" value="Adenylate_kinase_lid-dom"/>
</dbReference>
<dbReference type="InterPro" id="IPR027417">
    <property type="entry name" value="P-loop_NTPase"/>
</dbReference>
<dbReference type="NCBIfam" id="TIGR01351">
    <property type="entry name" value="adk"/>
    <property type="match status" value="1"/>
</dbReference>
<dbReference type="NCBIfam" id="NF001379">
    <property type="entry name" value="PRK00279.1-1"/>
    <property type="match status" value="1"/>
</dbReference>
<dbReference type="NCBIfam" id="NF001380">
    <property type="entry name" value="PRK00279.1-2"/>
    <property type="match status" value="1"/>
</dbReference>
<dbReference type="NCBIfam" id="NF001381">
    <property type="entry name" value="PRK00279.1-3"/>
    <property type="match status" value="1"/>
</dbReference>
<dbReference type="PANTHER" id="PTHR23359">
    <property type="entry name" value="NUCLEOTIDE KINASE"/>
    <property type="match status" value="1"/>
</dbReference>
<dbReference type="Pfam" id="PF00406">
    <property type="entry name" value="ADK"/>
    <property type="match status" value="1"/>
</dbReference>
<dbReference type="Pfam" id="PF05191">
    <property type="entry name" value="ADK_lid"/>
    <property type="match status" value="1"/>
</dbReference>
<dbReference type="PRINTS" id="PR00094">
    <property type="entry name" value="ADENYLTKNASE"/>
</dbReference>
<dbReference type="SUPFAM" id="SSF52540">
    <property type="entry name" value="P-loop containing nucleoside triphosphate hydrolases"/>
    <property type="match status" value="1"/>
</dbReference>
<feature type="chain" id="PRO_1000078275" description="Adenylate kinase">
    <location>
        <begin position="1"/>
        <end position="216"/>
    </location>
</feature>
<feature type="region of interest" description="NMP" evidence="1">
    <location>
        <begin position="30"/>
        <end position="59"/>
    </location>
</feature>
<feature type="region of interest" description="LID" evidence="1">
    <location>
        <begin position="122"/>
        <end position="159"/>
    </location>
</feature>
<feature type="binding site" evidence="1">
    <location>
        <begin position="10"/>
        <end position="15"/>
    </location>
    <ligand>
        <name>ATP</name>
        <dbReference type="ChEBI" id="CHEBI:30616"/>
    </ligand>
</feature>
<feature type="binding site" evidence="1">
    <location>
        <position position="31"/>
    </location>
    <ligand>
        <name>AMP</name>
        <dbReference type="ChEBI" id="CHEBI:456215"/>
    </ligand>
</feature>
<feature type="binding site" evidence="1">
    <location>
        <position position="36"/>
    </location>
    <ligand>
        <name>AMP</name>
        <dbReference type="ChEBI" id="CHEBI:456215"/>
    </ligand>
</feature>
<feature type="binding site" evidence="1">
    <location>
        <begin position="57"/>
        <end position="59"/>
    </location>
    <ligand>
        <name>AMP</name>
        <dbReference type="ChEBI" id="CHEBI:456215"/>
    </ligand>
</feature>
<feature type="binding site" evidence="1">
    <location>
        <position position="92"/>
    </location>
    <ligand>
        <name>AMP</name>
        <dbReference type="ChEBI" id="CHEBI:456215"/>
    </ligand>
</feature>
<feature type="binding site" evidence="1">
    <location>
        <position position="123"/>
    </location>
    <ligand>
        <name>ATP</name>
        <dbReference type="ChEBI" id="CHEBI:30616"/>
    </ligand>
</feature>
<feature type="binding site" evidence="1">
    <location>
        <begin position="132"/>
        <end position="133"/>
    </location>
    <ligand>
        <name>ATP</name>
        <dbReference type="ChEBI" id="CHEBI:30616"/>
    </ligand>
</feature>
<feature type="binding site" evidence="1">
    <location>
        <position position="156"/>
    </location>
    <ligand>
        <name>AMP</name>
        <dbReference type="ChEBI" id="CHEBI:456215"/>
    </ligand>
</feature>
<feature type="binding site" evidence="1">
    <location>
        <position position="167"/>
    </location>
    <ligand>
        <name>AMP</name>
        <dbReference type="ChEBI" id="CHEBI:456215"/>
    </ligand>
</feature>
<feature type="binding site" evidence="1">
    <location>
        <position position="202"/>
    </location>
    <ligand>
        <name>ATP</name>
        <dbReference type="ChEBI" id="CHEBI:30616"/>
    </ligand>
</feature>
<accession>B0TXR2</accession>
<comment type="function">
    <text evidence="1">Catalyzes the reversible transfer of the terminal phosphate group between ATP and AMP. Plays an important role in cellular energy homeostasis and in adenine nucleotide metabolism.</text>
</comment>
<comment type="catalytic activity">
    <reaction evidence="1">
        <text>AMP + ATP = 2 ADP</text>
        <dbReference type="Rhea" id="RHEA:12973"/>
        <dbReference type="ChEBI" id="CHEBI:30616"/>
        <dbReference type="ChEBI" id="CHEBI:456215"/>
        <dbReference type="ChEBI" id="CHEBI:456216"/>
        <dbReference type="EC" id="2.7.4.3"/>
    </reaction>
</comment>
<comment type="pathway">
    <text evidence="1">Purine metabolism; AMP biosynthesis via salvage pathway; AMP from ADP: step 1/1.</text>
</comment>
<comment type="subunit">
    <text evidence="1">Monomer.</text>
</comment>
<comment type="subcellular location">
    <subcellularLocation>
        <location evidence="1">Cytoplasm</location>
    </subcellularLocation>
</comment>
<comment type="domain">
    <text evidence="1">Consists of three domains, a large central CORE domain and two small peripheral domains, NMPbind and LID, which undergo movements during catalysis. The LID domain closes over the site of phosphoryl transfer upon ATP binding. Assembling and dissambling the active center during each catalytic cycle provides an effective means to prevent ATP hydrolysis.</text>
</comment>
<comment type="similarity">
    <text evidence="1">Belongs to the adenylate kinase family.</text>
</comment>
<reference key="1">
    <citation type="submission" date="2007-12" db="EMBL/GenBank/DDBJ databases">
        <title>Complete sequence of chromosome of Francisella philomiragia subsp. philomiragia ATCC 25017.</title>
        <authorList>
            <consortium name="US DOE Joint Genome Institute"/>
            <person name="Copeland A."/>
            <person name="Lucas S."/>
            <person name="Lapidus A."/>
            <person name="Barry K."/>
            <person name="Detter J.C."/>
            <person name="Glavina del Rio T."/>
            <person name="Hammon N."/>
            <person name="Israni S."/>
            <person name="Dalin E."/>
            <person name="Tice H."/>
            <person name="Pitluck S."/>
            <person name="Chain P."/>
            <person name="Malfatti S."/>
            <person name="Shin M."/>
            <person name="Vergez L."/>
            <person name="Schmutz J."/>
            <person name="Larimer F."/>
            <person name="Land M."/>
            <person name="Hauser L."/>
            <person name="Richardson P."/>
        </authorList>
    </citation>
    <scope>NUCLEOTIDE SEQUENCE [LARGE SCALE GENOMIC DNA]</scope>
    <source>
        <strain>ATCC 25017 / CCUG 19701 / FSC 153 / O#319-036</strain>
    </source>
</reference>
<organism>
    <name type="scientific">Francisella philomiragia subsp. philomiragia (strain ATCC 25017 / CCUG 19701 / FSC 153 / O#319-036)</name>
    <dbReference type="NCBI Taxonomy" id="484022"/>
    <lineage>
        <taxon>Bacteria</taxon>
        <taxon>Pseudomonadati</taxon>
        <taxon>Pseudomonadota</taxon>
        <taxon>Gammaproteobacteria</taxon>
        <taxon>Thiotrichales</taxon>
        <taxon>Francisellaceae</taxon>
        <taxon>Francisella</taxon>
    </lineage>
</organism>
<name>KAD_FRAP2</name>
<keyword id="KW-0067">ATP-binding</keyword>
<keyword id="KW-0963">Cytoplasm</keyword>
<keyword id="KW-0418">Kinase</keyword>
<keyword id="KW-0545">Nucleotide biosynthesis</keyword>
<keyword id="KW-0547">Nucleotide-binding</keyword>
<keyword id="KW-0808">Transferase</keyword>
<gene>
    <name evidence="1" type="primary">adk</name>
    <name type="ordered locus">Fphi_0011</name>
</gene>